<proteinExistence type="inferred from homology"/>
<sequence>MTDFSQIHKPVLLQECVDLVTPALHASDSVAVDCTLGLAGHTIAFLKAAPNATVIGIDRDEEALDKATARIAQEGLSARFVPVHAAFDQFDEVLRAQGVSRVQAVFMDLGLSSLQIDERERGFSYAHDAPLDMRMDTSQALTAREILATYDADRLAHIFKEYGEERFSKPIAKRIVQQRQSSPLETSSQLTALVDAVIPAARRGSGNPAKRVFQALRIEVNGELDKLRRTLPQIGLHLAVGGRLVVESYHSLEDRTVKNFMAQGLRVDAPADMPVIPPDMQPFFKALTKGAVKADAGEIAYNPRSASVRLRAVELTRPLPQRWVHAFELESQGSEDGVRGAHGHRRRTQARRG</sequence>
<feature type="chain" id="PRO_0000386746" description="Ribosomal RNA small subunit methyltransferase H">
    <location>
        <begin position="1"/>
        <end position="353"/>
    </location>
</feature>
<feature type="region of interest" description="Disordered" evidence="2">
    <location>
        <begin position="334"/>
        <end position="353"/>
    </location>
</feature>
<feature type="compositionally biased region" description="Basic residues" evidence="2">
    <location>
        <begin position="341"/>
        <end position="353"/>
    </location>
</feature>
<feature type="binding site" evidence="1">
    <location>
        <begin position="39"/>
        <end position="41"/>
    </location>
    <ligand>
        <name>S-adenosyl-L-methionine</name>
        <dbReference type="ChEBI" id="CHEBI:59789"/>
    </ligand>
</feature>
<feature type="binding site" evidence="1">
    <location>
        <position position="58"/>
    </location>
    <ligand>
        <name>S-adenosyl-L-methionine</name>
        <dbReference type="ChEBI" id="CHEBI:59789"/>
    </ligand>
</feature>
<feature type="binding site" evidence="1">
    <location>
        <position position="90"/>
    </location>
    <ligand>
        <name>S-adenosyl-L-methionine</name>
        <dbReference type="ChEBI" id="CHEBI:59789"/>
    </ligand>
</feature>
<feature type="binding site" evidence="1">
    <location>
        <position position="108"/>
    </location>
    <ligand>
        <name>S-adenosyl-L-methionine</name>
        <dbReference type="ChEBI" id="CHEBI:59789"/>
    </ligand>
</feature>
<feature type="binding site" evidence="1">
    <location>
        <position position="115"/>
    </location>
    <ligand>
        <name>S-adenosyl-L-methionine</name>
        <dbReference type="ChEBI" id="CHEBI:59789"/>
    </ligand>
</feature>
<reference key="1">
    <citation type="journal article" date="2009" name="J. Bacteriol.">
        <title>Genome sequence of the probiotic bacterium Bifidobacterium animalis subsp. lactis AD011.</title>
        <authorList>
            <person name="Kim J.F."/>
            <person name="Jeong H."/>
            <person name="Yu D.S."/>
            <person name="Choi S.-H."/>
            <person name="Hur C.-G."/>
            <person name="Park M.-S."/>
            <person name="Yoon S.H."/>
            <person name="Kim D.-W."/>
            <person name="Ji G.E."/>
            <person name="Park H.-S."/>
            <person name="Oh T.K."/>
        </authorList>
    </citation>
    <scope>NUCLEOTIDE SEQUENCE [LARGE SCALE GENOMIC DNA]</scope>
    <source>
        <strain>AD011</strain>
    </source>
</reference>
<organism>
    <name type="scientific">Bifidobacterium animalis subsp. lactis (strain AD011)</name>
    <dbReference type="NCBI Taxonomy" id="442563"/>
    <lineage>
        <taxon>Bacteria</taxon>
        <taxon>Bacillati</taxon>
        <taxon>Actinomycetota</taxon>
        <taxon>Actinomycetes</taxon>
        <taxon>Bifidobacteriales</taxon>
        <taxon>Bifidobacteriaceae</taxon>
        <taxon>Bifidobacterium</taxon>
    </lineage>
</organism>
<name>RSMH_BIFA0</name>
<keyword id="KW-0963">Cytoplasm</keyword>
<keyword id="KW-0489">Methyltransferase</keyword>
<keyword id="KW-1185">Reference proteome</keyword>
<keyword id="KW-0698">rRNA processing</keyword>
<keyword id="KW-0949">S-adenosyl-L-methionine</keyword>
<keyword id="KW-0808">Transferase</keyword>
<evidence type="ECO:0000255" key="1">
    <source>
        <dbReference type="HAMAP-Rule" id="MF_01007"/>
    </source>
</evidence>
<evidence type="ECO:0000256" key="2">
    <source>
        <dbReference type="SAM" id="MobiDB-lite"/>
    </source>
</evidence>
<gene>
    <name evidence="1" type="primary">rsmH</name>
    <name type="synonym">mraW</name>
    <name type="ordered locus">BLA_0784</name>
</gene>
<dbReference type="EC" id="2.1.1.199" evidence="1"/>
<dbReference type="EMBL" id="CP001213">
    <property type="protein sequence ID" value="ACL29076.1"/>
    <property type="molecule type" value="Genomic_DNA"/>
</dbReference>
<dbReference type="RefSeq" id="WP_004218638.1">
    <property type="nucleotide sequence ID" value="NC_011835.1"/>
</dbReference>
<dbReference type="SMR" id="B8DSU7"/>
<dbReference type="STRING" id="442563.BLA_0784"/>
<dbReference type="GeneID" id="29696604"/>
<dbReference type="KEGG" id="bla:BLA_0784"/>
<dbReference type="HOGENOM" id="CLU_038422_0_0_11"/>
<dbReference type="Proteomes" id="UP000002456">
    <property type="component" value="Chromosome"/>
</dbReference>
<dbReference type="GO" id="GO:0005737">
    <property type="term" value="C:cytoplasm"/>
    <property type="evidence" value="ECO:0007669"/>
    <property type="project" value="UniProtKB-SubCell"/>
</dbReference>
<dbReference type="GO" id="GO:0071424">
    <property type="term" value="F:rRNA (cytosine-N4-)-methyltransferase activity"/>
    <property type="evidence" value="ECO:0007669"/>
    <property type="project" value="UniProtKB-UniRule"/>
</dbReference>
<dbReference type="GO" id="GO:0070475">
    <property type="term" value="P:rRNA base methylation"/>
    <property type="evidence" value="ECO:0007669"/>
    <property type="project" value="UniProtKB-UniRule"/>
</dbReference>
<dbReference type="Gene3D" id="1.10.150.170">
    <property type="entry name" value="Putative methyltransferase TM0872, insert domain"/>
    <property type="match status" value="1"/>
</dbReference>
<dbReference type="Gene3D" id="3.40.50.150">
    <property type="entry name" value="Vaccinia Virus protein VP39"/>
    <property type="match status" value="1"/>
</dbReference>
<dbReference type="HAMAP" id="MF_01007">
    <property type="entry name" value="16SrRNA_methyltr_H"/>
    <property type="match status" value="1"/>
</dbReference>
<dbReference type="InterPro" id="IPR002903">
    <property type="entry name" value="RsmH"/>
</dbReference>
<dbReference type="InterPro" id="IPR023397">
    <property type="entry name" value="SAM-dep_MeTrfase_MraW_recog"/>
</dbReference>
<dbReference type="InterPro" id="IPR029063">
    <property type="entry name" value="SAM-dependent_MTases_sf"/>
</dbReference>
<dbReference type="NCBIfam" id="TIGR00006">
    <property type="entry name" value="16S rRNA (cytosine(1402)-N(4))-methyltransferase RsmH"/>
    <property type="match status" value="1"/>
</dbReference>
<dbReference type="PANTHER" id="PTHR11265:SF0">
    <property type="entry name" value="12S RRNA N4-METHYLCYTIDINE METHYLTRANSFERASE"/>
    <property type="match status" value="1"/>
</dbReference>
<dbReference type="PANTHER" id="PTHR11265">
    <property type="entry name" value="S-ADENOSYL-METHYLTRANSFERASE MRAW"/>
    <property type="match status" value="1"/>
</dbReference>
<dbReference type="Pfam" id="PF01795">
    <property type="entry name" value="Methyltransf_5"/>
    <property type="match status" value="1"/>
</dbReference>
<dbReference type="PIRSF" id="PIRSF004486">
    <property type="entry name" value="MraW"/>
    <property type="match status" value="1"/>
</dbReference>
<dbReference type="SUPFAM" id="SSF81799">
    <property type="entry name" value="Putative methyltransferase TM0872, insert domain"/>
    <property type="match status" value="1"/>
</dbReference>
<dbReference type="SUPFAM" id="SSF53335">
    <property type="entry name" value="S-adenosyl-L-methionine-dependent methyltransferases"/>
    <property type="match status" value="1"/>
</dbReference>
<accession>B8DSU7</accession>
<comment type="function">
    <text evidence="1">Specifically methylates the N4 position of cytidine in position 1402 (C1402) of 16S rRNA.</text>
</comment>
<comment type="catalytic activity">
    <reaction evidence="1">
        <text>cytidine(1402) in 16S rRNA + S-adenosyl-L-methionine = N(4)-methylcytidine(1402) in 16S rRNA + S-adenosyl-L-homocysteine + H(+)</text>
        <dbReference type="Rhea" id="RHEA:42928"/>
        <dbReference type="Rhea" id="RHEA-COMP:10286"/>
        <dbReference type="Rhea" id="RHEA-COMP:10287"/>
        <dbReference type="ChEBI" id="CHEBI:15378"/>
        <dbReference type="ChEBI" id="CHEBI:57856"/>
        <dbReference type="ChEBI" id="CHEBI:59789"/>
        <dbReference type="ChEBI" id="CHEBI:74506"/>
        <dbReference type="ChEBI" id="CHEBI:82748"/>
        <dbReference type="EC" id="2.1.1.199"/>
    </reaction>
</comment>
<comment type="subcellular location">
    <subcellularLocation>
        <location evidence="1">Cytoplasm</location>
    </subcellularLocation>
</comment>
<comment type="similarity">
    <text evidence="1">Belongs to the methyltransferase superfamily. RsmH family.</text>
</comment>
<protein>
    <recommendedName>
        <fullName evidence="1">Ribosomal RNA small subunit methyltransferase H</fullName>
        <ecNumber evidence="1">2.1.1.199</ecNumber>
    </recommendedName>
    <alternativeName>
        <fullName evidence="1">16S rRNA m(4)C1402 methyltransferase</fullName>
    </alternativeName>
    <alternativeName>
        <fullName evidence="1">rRNA (cytosine-N(4)-)-methyltransferase RsmH</fullName>
    </alternativeName>
</protein>